<protein>
    <recommendedName>
        <fullName evidence="1">Universal stress protein B</fullName>
    </recommendedName>
</protein>
<feature type="chain" id="PRO_1000064873" description="Universal stress protein B">
    <location>
        <begin position="1"/>
        <end position="111"/>
    </location>
</feature>
<feature type="transmembrane region" description="Helical" evidence="1">
    <location>
        <begin position="1"/>
        <end position="21"/>
    </location>
</feature>
<feature type="transmembrane region" description="Helical" evidence="1">
    <location>
        <begin position="90"/>
        <end position="110"/>
    </location>
</feature>
<organism>
    <name type="scientific">Escherichia coli O1:K1 / APEC</name>
    <dbReference type="NCBI Taxonomy" id="405955"/>
    <lineage>
        <taxon>Bacteria</taxon>
        <taxon>Pseudomonadati</taxon>
        <taxon>Pseudomonadota</taxon>
        <taxon>Gammaproteobacteria</taxon>
        <taxon>Enterobacterales</taxon>
        <taxon>Enterobacteriaceae</taxon>
        <taxon>Escherichia</taxon>
    </lineage>
</organism>
<gene>
    <name evidence="1" type="primary">uspB</name>
    <name type="ordered locus">Ecok1_34770</name>
    <name type="ORF">APECO1_2959</name>
</gene>
<evidence type="ECO:0000255" key="1">
    <source>
        <dbReference type="HAMAP-Rule" id="MF_01088"/>
    </source>
</evidence>
<comment type="subcellular location">
    <subcellularLocation>
        <location evidence="1">Cell inner membrane</location>
        <topology evidence="1">Multi-pass membrane protein</topology>
    </subcellularLocation>
</comment>
<comment type="similarity">
    <text evidence="1">Belongs to the universal stress protein B family.</text>
</comment>
<reference key="1">
    <citation type="journal article" date="2007" name="J. Bacteriol.">
        <title>The genome sequence of avian pathogenic Escherichia coli strain O1:K1:H7 shares strong similarities with human extraintestinal pathogenic E. coli genomes.</title>
        <authorList>
            <person name="Johnson T.J."/>
            <person name="Kariyawasam S."/>
            <person name="Wannemuehler Y."/>
            <person name="Mangiamele P."/>
            <person name="Johnson S.J."/>
            <person name="Doetkott C."/>
            <person name="Skyberg J.A."/>
            <person name="Lynne A.M."/>
            <person name="Johnson J.R."/>
            <person name="Nolan L.K."/>
        </authorList>
    </citation>
    <scope>NUCLEOTIDE SEQUENCE [LARGE SCALE GENOMIC DNA]</scope>
</reference>
<accession>A1AH31</accession>
<name>USPB_ECOK1</name>
<keyword id="KW-0997">Cell inner membrane</keyword>
<keyword id="KW-1003">Cell membrane</keyword>
<keyword id="KW-0472">Membrane</keyword>
<keyword id="KW-1185">Reference proteome</keyword>
<keyword id="KW-0812">Transmembrane</keyword>
<keyword id="KW-1133">Transmembrane helix</keyword>
<sequence length="111" mass="13027">MISTVALFWALCVVCIVNMARYFSSLRALLVVLRNCDPLLYQYVDGGGFFTSHGQPNKQVRLVWYIYAQRYRDHHDDEFIRRCERVRRQFILTSALCGLVVVSLIALMIWH</sequence>
<dbReference type="EMBL" id="CP000468">
    <property type="protein sequence ID" value="ABJ02971.1"/>
    <property type="molecule type" value="Genomic_DNA"/>
</dbReference>
<dbReference type="RefSeq" id="WP_000626187.1">
    <property type="nucleotide sequence ID" value="NZ_CADILS010000090.1"/>
</dbReference>
<dbReference type="SMR" id="A1AH31"/>
<dbReference type="GeneID" id="93778499"/>
<dbReference type="KEGG" id="ecv:APECO1_2959"/>
<dbReference type="HOGENOM" id="CLU_151816_0_0_6"/>
<dbReference type="Proteomes" id="UP000008216">
    <property type="component" value="Chromosome"/>
</dbReference>
<dbReference type="GO" id="GO:0005886">
    <property type="term" value="C:plasma membrane"/>
    <property type="evidence" value="ECO:0007669"/>
    <property type="project" value="UniProtKB-SubCell"/>
</dbReference>
<dbReference type="HAMAP" id="MF_01088">
    <property type="entry name" value="UspB"/>
    <property type="match status" value="1"/>
</dbReference>
<dbReference type="InterPro" id="IPR019598">
    <property type="entry name" value="Universal_stress_protein_B"/>
</dbReference>
<dbReference type="NCBIfam" id="NF003435">
    <property type="entry name" value="PRK04960.1"/>
    <property type="match status" value="1"/>
</dbReference>
<dbReference type="Pfam" id="PF10625">
    <property type="entry name" value="UspB"/>
    <property type="match status" value="1"/>
</dbReference>
<proteinExistence type="inferred from homology"/>